<gene>
    <name evidence="5" type="primary">drrB1</name>
    <name evidence="7" type="synonym">drrB</name>
    <name evidence="7" type="ORF">R5U08_05030</name>
</gene>
<accession>P0DXU4</accession>
<keyword id="KW-0046">Antibiotic resistance</keyword>
<keyword id="KW-1003">Cell membrane</keyword>
<keyword id="KW-0472">Membrane</keyword>
<keyword id="KW-0812">Transmembrane</keyword>
<keyword id="KW-1133">Transmembrane helix</keyword>
<organism>
    <name type="scientific">Streptomyces coeruleorubidus</name>
    <dbReference type="NCBI Taxonomy" id="116188"/>
    <lineage>
        <taxon>Bacteria</taxon>
        <taxon>Bacillati</taxon>
        <taxon>Actinomycetota</taxon>
        <taxon>Actinomycetes</taxon>
        <taxon>Kitasatosporales</taxon>
        <taxon>Streptomycetaceae</taxon>
        <taxon>Streptomyces</taxon>
    </lineage>
</organism>
<feature type="chain" id="PRO_0000461854" description="Daunorubicin resistance ABC transporter permease protein DrrB1">
    <location>
        <begin position="1"/>
        <end position="283"/>
    </location>
</feature>
<feature type="transmembrane region" description="Helical" evidence="2">
    <location>
        <begin position="58"/>
        <end position="78"/>
    </location>
</feature>
<feature type="transmembrane region" description="Helical" evidence="2">
    <location>
        <begin position="85"/>
        <end position="105"/>
    </location>
</feature>
<feature type="transmembrane region" description="Helical" evidence="2">
    <location>
        <begin position="150"/>
        <end position="170"/>
    </location>
</feature>
<feature type="transmembrane region" description="Helical" evidence="2">
    <location>
        <begin position="171"/>
        <end position="191"/>
    </location>
</feature>
<feature type="transmembrane region" description="Helical" evidence="2">
    <location>
        <begin position="198"/>
        <end position="218"/>
    </location>
</feature>
<feature type="transmembrane region" description="Helical" evidence="2">
    <location>
        <begin position="252"/>
        <end position="272"/>
    </location>
</feature>
<feature type="domain" description="ABC transmembrane type-2" evidence="3">
    <location>
        <begin position="53"/>
        <end position="280"/>
    </location>
</feature>
<name>DRRB1_STRC4</name>
<protein>
    <recommendedName>
        <fullName evidence="6">Daunorubicin resistance ABC transporter permease protein DrrB1</fullName>
    </recommendedName>
</protein>
<sequence>MTTSPGTVESTTPVSGQLRTVLSAGERPARATAVSATLTHLWRAMMAFKHFPVQLIDIVLMPLIFLLMFTYLFGGAFADSTEEYLQFYLPGVTVQAVVMMTVYTGTSLNTDIHKGVFDRFRTLPFWQPATLAGSLLGDVLRYVVALATTVFLGLLLGFRADGGFLGVVGAMLVLIVFGFSVSWIFAALGVVASEPERVSGTSMIVLYPLLFMSNIFVMPETMPGWMQAIVDANPMSHAATASRELMHGTAGFWDVGLVLCVSAGLVAVFAPLTMRLYRNKNAH</sequence>
<dbReference type="EMBL" id="CP137524">
    <property type="protein sequence ID" value="WOT33551.1"/>
    <property type="molecule type" value="Genomic_DNA"/>
</dbReference>
<dbReference type="RefSeq" id="WP_193507389.1">
    <property type="nucleotide sequence ID" value="NZ_BMSO01000019.1"/>
</dbReference>
<dbReference type="GO" id="GO:0043190">
    <property type="term" value="C:ATP-binding cassette (ABC) transporter complex"/>
    <property type="evidence" value="ECO:0007669"/>
    <property type="project" value="InterPro"/>
</dbReference>
<dbReference type="GO" id="GO:0140359">
    <property type="term" value="F:ABC-type transporter activity"/>
    <property type="evidence" value="ECO:0007669"/>
    <property type="project" value="InterPro"/>
</dbReference>
<dbReference type="GO" id="GO:0046677">
    <property type="term" value="P:response to antibiotic"/>
    <property type="evidence" value="ECO:0007669"/>
    <property type="project" value="UniProtKB-KW"/>
</dbReference>
<dbReference type="InterPro" id="IPR013525">
    <property type="entry name" value="ABC2_TM"/>
</dbReference>
<dbReference type="InterPro" id="IPR047817">
    <property type="entry name" value="ABC2_TM_bact-type"/>
</dbReference>
<dbReference type="InterPro" id="IPR000412">
    <property type="entry name" value="ABC_2_transport"/>
</dbReference>
<dbReference type="InterPro" id="IPR051328">
    <property type="entry name" value="T7SS_ABC-Transporter"/>
</dbReference>
<dbReference type="PANTHER" id="PTHR43077:SF8">
    <property type="entry name" value="DOXORUBICIN RESISTANCE ABC TRANSPORTER PERMEASE PROTEIN DRRB"/>
    <property type="match status" value="1"/>
</dbReference>
<dbReference type="PANTHER" id="PTHR43077">
    <property type="entry name" value="TRANSPORT PERMEASE YVFS-RELATED"/>
    <property type="match status" value="1"/>
</dbReference>
<dbReference type="Pfam" id="PF01061">
    <property type="entry name" value="ABC2_membrane"/>
    <property type="match status" value="1"/>
</dbReference>
<dbReference type="PIRSF" id="PIRSF006648">
    <property type="entry name" value="DrrB"/>
    <property type="match status" value="1"/>
</dbReference>
<dbReference type="PROSITE" id="PS51012">
    <property type="entry name" value="ABC_TM2"/>
    <property type="match status" value="1"/>
</dbReference>
<evidence type="ECO:0000250" key="1">
    <source>
        <dbReference type="UniProtKB" id="P32011"/>
    </source>
</evidence>
<evidence type="ECO:0000255" key="2"/>
<evidence type="ECO:0000255" key="3">
    <source>
        <dbReference type="PROSITE-ProRule" id="PRU00442"/>
    </source>
</evidence>
<evidence type="ECO:0000269" key="4">
    <source>
    </source>
</evidence>
<evidence type="ECO:0000303" key="5">
    <source>
    </source>
</evidence>
<evidence type="ECO:0000305" key="6"/>
<evidence type="ECO:0000312" key="7">
    <source>
        <dbReference type="EMBL" id="WOT33551.1"/>
    </source>
</evidence>
<proteinExistence type="evidence at protein level"/>
<reference key="1">
    <citation type="submission" date="2023-10" db="EMBL/GenBank/DDBJ databases">
        <authorList>
            <person name="Guan W."/>
        </authorList>
    </citation>
    <scope>NUCLEOTIDE SEQUENCE [LARGE SCALE GENOMIC DNA]</scope>
    <source>
        <strain>CICC 11043</strain>
    </source>
</reference>
<reference key="2">
    <citation type="journal article" date="2024" name="Microb. Biotechnol.">
        <title>The involvement of multiple ABC transporters in daunorubicin efflux in Streptomyces coeruleorubidus.</title>
        <authorList>
            <person name="Dong J."/>
            <person name="Ning J."/>
            <person name="Tian Y."/>
            <person name="Li H."/>
            <person name="Chen H."/>
            <person name="Guan W."/>
        </authorList>
    </citation>
    <scope>FUNCTION IN DAUNORUBICIN EFFLUX</scope>
    <scope>DISRUPTION PHENOTYPE</scope>
</reference>
<comment type="function">
    <text evidence="4 6">Part of the ABC transporter complex DrrA1B1 involved in daunorubicin efflux (PubMed:39375957). Responsible for the translocation of the substrate across the membrane (Probable). Confers self-resistance to daunorubicin, an antibiotic produced by S.coeruleorubidus (PubMed:39375957).</text>
</comment>
<comment type="subunit">
    <text evidence="6">The complex is probably composed of two ATP-binding proteins (DrrA1) and two transmembrane proteins (DrrB1).</text>
</comment>
<comment type="subcellular location">
    <subcellularLocation>
        <location evidence="1">Cell membrane</location>
        <topology evidence="2">Multi-pass membrane protein</topology>
    </subcellularLocation>
</comment>
<comment type="disruption phenotype">
    <text evidence="4">Deletion of the drrA1-drrB1 operon decreases by 31% the daunorubicin (DNR) titer in cell culture (PubMed:39375957). The drrA1-drrB1 mutant exhibits no growth defect compared with the wild-type strain and no significant change on DNR sensitivity (PubMed:39375957). Deletion of the drrA1-drrB1, drrA2-drrB2 and drrA3-drrB3 operons almost blocks DNR production in cell culture, suggesting that disruption of these operons impairs the efflux of DNR, resulting in intracellular accumulation (PubMed:39375957).</text>
</comment>
<comment type="similarity">
    <text evidence="6">Belongs to the ABC-2 integral membrane protein family.</text>
</comment>